<gene>
    <name evidence="1" type="primary">nfi</name>
    <name type="ordered locus">UTI89_C3821</name>
</gene>
<comment type="function">
    <text evidence="1">DNA repair enzyme involved in the repair of deaminated bases. Selectively cleaves double-stranded DNA at the second phosphodiester bond 3' to a deoxyinosine leaving behind the intact lesion on the nicked DNA.</text>
</comment>
<comment type="catalytic activity">
    <reaction evidence="1">
        <text>Endonucleolytic cleavage at apurinic or apyrimidinic sites to products with a 5'-phosphate.</text>
        <dbReference type="EC" id="3.1.21.7"/>
    </reaction>
</comment>
<comment type="cofactor">
    <cofactor evidence="1">
        <name>Mg(2+)</name>
        <dbReference type="ChEBI" id="CHEBI:18420"/>
    </cofactor>
</comment>
<comment type="subcellular location">
    <subcellularLocation>
        <location evidence="1">Cytoplasm</location>
    </subcellularLocation>
</comment>
<comment type="similarity">
    <text evidence="1">Belongs to the endonuclease V family.</text>
</comment>
<dbReference type="EC" id="3.1.21.7" evidence="1"/>
<dbReference type="EMBL" id="CP000243">
    <property type="protein sequence ID" value="ABE09250.1"/>
    <property type="molecule type" value="Genomic_DNA"/>
</dbReference>
<dbReference type="RefSeq" id="WP_000362388.1">
    <property type="nucleotide sequence ID" value="NZ_CP064825.1"/>
</dbReference>
<dbReference type="SMR" id="Q1R5W4"/>
<dbReference type="GeneID" id="75169444"/>
<dbReference type="KEGG" id="eci:UTI89_C3821"/>
<dbReference type="HOGENOM" id="CLU_047631_1_0_6"/>
<dbReference type="Proteomes" id="UP000001952">
    <property type="component" value="Chromosome"/>
</dbReference>
<dbReference type="GO" id="GO:0005737">
    <property type="term" value="C:cytoplasm"/>
    <property type="evidence" value="ECO:0007669"/>
    <property type="project" value="UniProtKB-SubCell"/>
</dbReference>
<dbReference type="GO" id="GO:0043737">
    <property type="term" value="F:deoxyribonuclease V activity"/>
    <property type="evidence" value="ECO:0007669"/>
    <property type="project" value="UniProtKB-UniRule"/>
</dbReference>
<dbReference type="GO" id="GO:0000287">
    <property type="term" value="F:magnesium ion binding"/>
    <property type="evidence" value="ECO:0007669"/>
    <property type="project" value="UniProtKB-UniRule"/>
</dbReference>
<dbReference type="GO" id="GO:0016891">
    <property type="term" value="F:RNA endonuclease activity, producing 5'-phosphomonoesters"/>
    <property type="evidence" value="ECO:0007669"/>
    <property type="project" value="TreeGrafter"/>
</dbReference>
<dbReference type="GO" id="GO:0003727">
    <property type="term" value="F:single-stranded RNA binding"/>
    <property type="evidence" value="ECO:0007669"/>
    <property type="project" value="TreeGrafter"/>
</dbReference>
<dbReference type="GO" id="GO:0006281">
    <property type="term" value="P:DNA repair"/>
    <property type="evidence" value="ECO:0007669"/>
    <property type="project" value="UniProtKB-UniRule"/>
</dbReference>
<dbReference type="CDD" id="cd06559">
    <property type="entry name" value="Endonuclease_V"/>
    <property type="match status" value="1"/>
</dbReference>
<dbReference type="FunFam" id="3.30.2170.10:FF:000001">
    <property type="entry name" value="Endonuclease V"/>
    <property type="match status" value="1"/>
</dbReference>
<dbReference type="Gene3D" id="3.30.2170.10">
    <property type="entry name" value="archaeoglobus fulgidus dsm 4304 superfamily"/>
    <property type="match status" value="1"/>
</dbReference>
<dbReference type="HAMAP" id="MF_00801">
    <property type="entry name" value="Endonuclease_5"/>
    <property type="match status" value="1"/>
</dbReference>
<dbReference type="InterPro" id="IPR007581">
    <property type="entry name" value="Endonuclease-V"/>
</dbReference>
<dbReference type="NCBIfam" id="NF008629">
    <property type="entry name" value="PRK11617.1"/>
    <property type="match status" value="1"/>
</dbReference>
<dbReference type="PANTHER" id="PTHR28511">
    <property type="entry name" value="ENDONUCLEASE V"/>
    <property type="match status" value="1"/>
</dbReference>
<dbReference type="PANTHER" id="PTHR28511:SF1">
    <property type="entry name" value="ENDONUCLEASE V"/>
    <property type="match status" value="1"/>
</dbReference>
<dbReference type="Pfam" id="PF04493">
    <property type="entry name" value="Endonuclease_5"/>
    <property type="match status" value="1"/>
</dbReference>
<sequence length="223" mass="24673">MDLASLRAQQIELASSVIREDRLDKDPPDLIAGADVGFEQGGEVTRAAMVLLKYPSLELVEYKVARIATTMPYIPGFLSFREYPALLAAWEMLSQKPDLVFVDGHGISHPRRLGVASHFGLLVDVPTIGVAKKRLCGKFEPLSSEPGALAPLMDKGEQLAWVWRSKARCNPLFIATGHRVSVDSALAWVQRCMKGYRLPEPTRWADAVASERPAFVRYTANQP</sequence>
<reference key="1">
    <citation type="journal article" date="2006" name="Proc. Natl. Acad. Sci. U.S.A.">
        <title>Identification of genes subject to positive selection in uropathogenic strains of Escherichia coli: a comparative genomics approach.</title>
        <authorList>
            <person name="Chen S.L."/>
            <person name="Hung C.-S."/>
            <person name="Xu J."/>
            <person name="Reigstad C.S."/>
            <person name="Magrini V."/>
            <person name="Sabo A."/>
            <person name="Blasiar D."/>
            <person name="Bieri T."/>
            <person name="Meyer R.R."/>
            <person name="Ozersky P."/>
            <person name="Armstrong J.R."/>
            <person name="Fulton R.S."/>
            <person name="Latreille J.P."/>
            <person name="Spieth J."/>
            <person name="Hooton T.M."/>
            <person name="Mardis E.R."/>
            <person name="Hultgren S.J."/>
            <person name="Gordon J.I."/>
        </authorList>
    </citation>
    <scope>NUCLEOTIDE SEQUENCE [LARGE SCALE GENOMIC DNA]</scope>
    <source>
        <strain>UTI89 / UPEC</strain>
    </source>
</reference>
<organism>
    <name type="scientific">Escherichia coli (strain UTI89 / UPEC)</name>
    <dbReference type="NCBI Taxonomy" id="364106"/>
    <lineage>
        <taxon>Bacteria</taxon>
        <taxon>Pseudomonadati</taxon>
        <taxon>Pseudomonadota</taxon>
        <taxon>Gammaproteobacteria</taxon>
        <taxon>Enterobacterales</taxon>
        <taxon>Enterobacteriaceae</taxon>
        <taxon>Escherichia</taxon>
    </lineage>
</organism>
<protein>
    <recommendedName>
        <fullName evidence="1">Endonuclease V</fullName>
        <ecNumber evidence="1">3.1.21.7</ecNumber>
    </recommendedName>
    <alternativeName>
        <fullName evidence="1">Deoxyinosine 3'endonuclease</fullName>
    </alternativeName>
    <alternativeName>
        <fullName evidence="1">Deoxyribonuclease V</fullName>
        <shortName evidence="1">DNase V</shortName>
    </alternativeName>
</protein>
<accession>Q1R5W4</accession>
<proteinExistence type="inferred from homology"/>
<name>NFI_ECOUT</name>
<feature type="chain" id="PRO_1000046996" description="Endonuclease V">
    <location>
        <begin position="1"/>
        <end position="223"/>
    </location>
</feature>
<feature type="binding site" evidence="1">
    <location>
        <position position="35"/>
    </location>
    <ligand>
        <name>Mg(2+)</name>
        <dbReference type="ChEBI" id="CHEBI:18420"/>
    </ligand>
</feature>
<feature type="binding site" evidence="1">
    <location>
        <position position="103"/>
    </location>
    <ligand>
        <name>Mg(2+)</name>
        <dbReference type="ChEBI" id="CHEBI:18420"/>
    </ligand>
</feature>
<feature type="site" description="Interaction with target DNA" evidence="1">
    <location>
        <position position="73"/>
    </location>
</feature>
<keyword id="KW-0963">Cytoplasm</keyword>
<keyword id="KW-0227">DNA damage</keyword>
<keyword id="KW-0234">DNA repair</keyword>
<keyword id="KW-0255">Endonuclease</keyword>
<keyword id="KW-0378">Hydrolase</keyword>
<keyword id="KW-0460">Magnesium</keyword>
<keyword id="KW-0479">Metal-binding</keyword>
<keyword id="KW-0540">Nuclease</keyword>
<evidence type="ECO:0000255" key="1">
    <source>
        <dbReference type="HAMAP-Rule" id="MF_00801"/>
    </source>
</evidence>